<keyword id="KW-0028">Amino-acid biosynthesis</keyword>
<keyword id="KW-0170">Cobalt</keyword>
<keyword id="KW-0220">Diaminopimelate biosynthesis</keyword>
<keyword id="KW-0378">Hydrolase</keyword>
<keyword id="KW-0457">Lysine biosynthesis</keyword>
<keyword id="KW-0479">Metal-binding</keyword>
<keyword id="KW-0862">Zinc</keyword>
<reference key="1">
    <citation type="journal article" date="2010" name="Genome Biol. Evol.">
        <title>Continuing evolution of Burkholderia mallei through genome reduction and large-scale rearrangements.</title>
        <authorList>
            <person name="Losada L."/>
            <person name="Ronning C.M."/>
            <person name="DeShazer D."/>
            <person name="Woods D."/>
            <person name="Fedorova N."/>
            <person name="Kim H.S."/>
            <person name="Shabalina S.A."/>
            <person name="Pearson T.R."/>
            <person name="Brinkac L."/>
            <person name="Tan P."/>
            <person name="Nandi T."/>
            <person name="Crabtree J."/>
            <person name="Badger J."/>
            <person name="Beckstrom-Sternberg S."/>
            <person name="Saqib M."/>
            <person name="Schutzer S.E."/>
            <person name="Keim P."/>
            <person name="Nierman W.C."/>
        </authorList>
    </citation>
    <scope>NUCLEOTIDE SEQUENCE [LARGE SCALE GENOMIC DNA]</scope>
    <source>
        <strain>SAVP1</strain>
    </source>
</reference>
<feature type="chain" id="PRO_0000375504" description="Succinyl-diaminopimelate desuccinylase">
    <location>
        <begin position="1"/>
        <end position="379"/>
    </location>
</feature>
<feature type="active site" evidence="1">
    <location>
        <position position="72"/>
    </location>
</feature>
<feature type="active site" description="Proton acceptor" evidence="1">
    <location>
        <position position="137"/>
    </location>
</feature>
<feature type="binding site" evidence="1">
    <location>
        <position position="70"/>
    </location>
    <ligand>
        <name>Zn(2+)</name>
        <dbReference type="ChEBI" id="CHEBI:29105"/>
        <label>1</label>
    </ligand>
</feature>
<feature type="binding site" evidence="1">
    <location>
        <position position="103"/>
    </location>
    <ligand>
        <name>Zn(2+)</name>
        <dbReference type="ChEBI" id="CHEBI:29105"/>
        <label>1</label>
    </ligand>
</feature>
<feature type="binding site" evidence="1">
    <location>
        <position position="103"/>
    </location>
    <ligand>
        <name>Zn(2+)</name>
        <dbReference type="ChEBI" id="CHEBI:29105"/>
        <label>2</label>
    </ligand>
</feature>
<feature type="binding site" evidence="1">
    <location>
        <position position="138"/>
    </location>
    <ligand>
        <name>Zn(2+)</name>
        <dbReference type="ChEBI" id="CHEBI:29105"/>
        <label>2</label>
    </ligand>
</feature>
<feature type="binding site" evidence="1">
    <location>
        <position position="166"/>
    </location>
    <ligand>
        <name>Zn(2+)</name>
        <dbReference type="ChEBI" id="CHEBI:29105"/>
        <label>1</label>
    </ligand>
</feature>
<feature type="binding site" evidence="1">
    <location>
        <position position="352"/>
    </location>
    <ligand>
        <name>Zn(2+)</name>
        <dbReference type="ChEBI" id="CHEBI:29105"/>
        <label>2</label>
    </ligand>
</feature>
<organism>
    <name type="scientific">Burkholderia mallei (strain SAVP1)</name>
    <dbReference type="NCBI Taxonomy" id="320388"/>
    <lineage>
        <taxon>Bacteria</taxon>
        <taxon>Pseudomonadati</taxon>
        <taxon>Pseudomonadota</taxon>
        <taxon>Betaproteobacteria</taxon>
        <taxon>Burkholderiales</taxon>
        <taxon>Burkholderiaceae</taxon>
        <taxon>Burkholderia</taxon>
        <taxon>pseudomallei group</taxon>
    </lineage>
</organism>
<accession>A1V584</accession>
<dbReference type="EC" id="3.5.1.18" evidence="1"/>
<dbReference type="EMBL" id="CP000526">
    <property type="protein sequence ID" value="ABM52473.1"/>
    <property type="molecule type" value="Genomic_DNA"/>
</dbReference>
<dbReference type="RefSeq" id="WP_004191377.1">
    <property type="nucleotide sequence ID" value="NC_008785.1"/>
</dbReference>
<dbReference type="SMR" id="A1V584"/>
<dbReference type="GeneID" id="92979293"/>
<dbReference type="KEGG" id="bmv:BMASAVP1_A2071"/>
<dbReference type="HOGENOM" id="CLU_021802_4_0_4"/>
<dbReference type="UniPathway" id="UPA00034">
    <property type="reaction ID" value="UER00021"/>
</dbReference>
<dbReference type="GO" id="GO:0008777">
    <property type="term" value="F:acetylornithine deacetylase activity"/>
    <property type="evidence" value="ECO:0007669"/>
    <property type="project" value="TreeGrafter"/>
</dbReference>
<dbReference type="GO" id="GO:0050897">
    <property type="term" value="F:cobalt ion binding"/>
    <property type="evidence" value="ECO:0007669"/>
    <property type="project" value="UniProtKB-UniRule"/>
</dbReference>
<dbReference type="GO" id="GO:0009014">
    <property type="term" value="F:succinyl-diaminopimelate desuccinylase activity"/>
    <property type="evidence" value="ECO:0007669"/>
    <property type="project" value="UniProtKB-UniRule"/>
</dbReference>
<dbReference type="GO" id="GO:0008270">
    <property type="term" value="F:zinc ion binding"/>
    <property type="evidence" value="ECO:0007669"/>
    <property type="project" value="UniProtKB-UniRule"/>
</dbReference>
<dbReference type="GO" id="GO:0019877">
    <property type="term" value="P:diaminopimelate biosynthetic process"/>
    <property type="evidence" value="ECO:0007669"/>
    <property type="project" value="UniProtKB-UniRule"/>
</dbReference>
<dbReference type="GO" id="GO:0006526">
    <property type="term" value="P:L-arginine biosynthetic process"/>
    <property type="evidence" value="ECO:0007669"/>
    <property type="project" value="TreeGrafter"/>
</dbReference>
<dbReference type="GO" id="GO:0009089">
    <property type="term" value="P:lysine biosynthetic process via diaminopimelate"/>
    <property type="evidence" value="ECO:0007669"/>
    <property type="project" value="UniProtKB-UniRule"/>
</dbReference>
<dbReference type="CDD" id="cd03891">
    <property type="entry name" value="M20_DapE_proteobac"/>
    <property type="match status" value="1"/>
</dbReference>
<dbReference type="FunFam" id="3.30.70.360:FF:000011">
    <property type="entry name" value="Succinyl-diaminopimelate desuccinylase"/>
    <property type="match status" value="1"/>
</dbReference>
<dbReference type="FunFam" id="3.40.630.10:FF:000005">
    <property type="entry name" value="Succinyl-diaminopimelate desuccinylase"/>
    <property type="match status" value="1"/>
</dbReference>
<dbReference type="Gene3D" id="3.40.630.10">
    <property type="entry name" value="Zn peptidases"/>
    <property type="match status" value="2"/>
</dbReference>
<dbReference type="HAMAP" id="MF_01690">
    <property type="entry name" value="DapE"/>
    <property type="match status" value="1"/>
</dbReference>
<dbReference type="InterPro" id="IPR001261">
    <property type="entry name" value="ArgE/DapE_CS"/>
</dbReference>
<dbReference type="InterPro" id="IPR036264">
    <property type="entry name" value="Bact_exopeptidase_dim_dom"/>
</dbReference>
<dbReference type="InterPro" id="IPR005941">
    <property type="entry name" value="DapE_proteobac"/>
</dbReference>
<dbReference type="InterPro" id="IPR002933">
    <property type="entry name" value="Peptidase_M20"/>
</dbReference>
<dbReference type="InterPro" id="IPR011650">
    <property type="entry name" value="Peptidase_M20_dimer"/>
</dbReference>
<dbReference type="InterPro" id="IPR050072">
    <property type="entry name" value="Peptidase_M20A"/>
</dbReference>
<dbReference type="NCBIfam" id="TIGR01246">
    <property type="entry name" value="dapE_proteo"/>
    <property type="match status" value="1"/>
</dbReference>
<dbReference type="NCBIfam" id="NF009557">
    <property type="entry name" value="PRK13009.1"/>
    <property type="match status" value="1"/>
</dbReference>
<dbReference type="PANTHER" id="PTHR43808">
    <property type="entry name" value="ACETYLORNITHINE DEACETYLASE"/>
    <property type="match status" value="1"/>
</dbReference>
<dbReference type="PANTHER" id="PTHR43808:SF31">
    <property type="entry name" value="N-ACETYL-L-CITRULLINE DEACETYLASE"/>
    <property type="match status" value="1"/>
</dbReference>
<dbReference type="Pfam" id="PF07687">
    <property type="entry name" value="M20_dimer"/>
    <property type="match status" value="1"/>
</dbReference>
<dbReference type="Pfam" id="PF01546">
    <property type="entry name" value="Peptidase_M20"/>
    <property type="match status" value="1"/>
</dbReference>
<dbReference type="SUPFAM" id="SSF55031">
    <property type="entry name" value="Bacterial exopeptidase dimerisation domain"/>
    <property type="match status" value="1"/>
</dbReference>
<dbReference type="SUPFAM" id="SSF53187">
    <property type="entry name" value="Zn-dependent exopeptidases"/>
    <property type="match status" value="1"/>
</dbReference>
<dbReference type="PROSITE" id="PS00758">
    <property type="entry name" value="ARGE_DAPE_CPG2_1"/>
    <property type="match status" value="1"/>
</dbReference>
<comment type="function">
    <text evidence="1">Catalyzes the hydrolysis of N-succinyl-L,L-diaminopimelic acid (SDAP), forming succinate and LL-2,6-diaminopimelate (DAP), an intermediate involved in the bacterial biosynthesis of lysine and meso-diaminopimelic acid, an essential component of bacterial cell walls.</text>
</comment>
<comment type="catalytic activity">
    <reaction evidence="1">
        <text>N-succinyl-(2S,6S)-2,6-diaminopimelate + H2O = (2S,6S)-2,6-diaminopimelate + succinate</text>
        <dbReference type="Rhea" id="RHEA:22608"/>
        <dbReference type="ChEBI" id="CHEBI:15377"/>
        <dbReference type="ChEBI" id="CHEBI:30031"/>
        <dbReference type="ChEBI" id="CHEBI:57609"/>
        <dbReference type="ChEBI" id="CHEBI:58087"/>
        <dbReference type="EC" id="3.5.1.18"/>
    </reaction>
</comment>
<comment type="cofactor">
    <cofactor evidence="1">
        <name>Zn(2+)</name>
        <dbReference type="ChEBI" id="CHEBI:29105"/>
    </cofactor>
    <cofactor evidence="1">
        <name>Co(2+)</name>
        <dbReference type="ChEBI" id="CHEBI:48828"/>
    </cofactor>
    <text evidence="1">Binds 2 Zn(2+) or Co(2+) ions per subunit.</text>
</comment>
<comment type="pathway">
    <text evidence="1">Amino-acid biosynthesis; L-lysine biosynthesis via DAP pathway; LL-2,6-diaminopimelate from (S)-tetrahydrodipicolinate (succinylase route): step 3/3.</text>
</comment>
<comment type="subunit">
    <text evidence="1">Homodimer.</text>
</comment>
<comment type="similarity">
    <text evidence="1">Belongs to the peptidase M20A family. DapE subfamily.</text>
</comment>
<evidence type="ECO:0000255" key="1">
    <source>
        <dbReference type="HAMAP-Rule" id="MF_01690"/>
    </source>
</evidence>
<sequence>MSATLALTEQLIARASVTPDDQHCQQLMIERLAALGFECETIASHGVTNFWAVKRGTAGRAGKLLAFAGHTDVVPTGPLEQWRSPPFVPTHRDGKLYGRGAADMKTSLAGFVVAAEEFVAAHPQHRGSIGFLITSDEEGPATDGTVKVVEALAARGERLDYCIVGEPTSTATLGDVVKNGRRGSMSGELVVKGVQGHIAYPHLAKNPIHLLAPALAELAAEQWDEGNEYFPPTTWQVSNLRAGTGATNVIPGHADLLFNFRFSTASTVEGLQARVHAILDRHGLDYTLNWSVSGLPFLTPRGELSNALDAAIRAETGVSPELSTTGGTSDGRFIARICPQVIEFGPPNASIHKIDEHIDVRFVDPLKNVYRRVLEQLIA</sequence>
<gene>
    <name evidence="1" type="primary">dapE</name>
    <name type="ordered locus">BMASAVP1_A2071</name>
</gene>
<protein>
    <recommendedName>
        <fullName evidence="1">Succinyl-diaminopimelate desuccinylase</fullName>
        <shortName evidence="1">SDAP desuccinylase</shortName>
        <ecNumber evidence="1">3.5.1.18</ecNumber>
    </recommendedName>
    <alternativeName>
        <fullName evidence="1">N-succinyl-LL-2,6-diaminoheptanedioate amidohydrolase</fullName>
    </alternativeName>
</protein>
<name>DAPE_BURMS</name>
<proteinExistence type="inferred from homology"/>